<organism>
    <name type="scientific">Azotobacter chroococcum mcd 1</name>
    <dbReference type="NCBI Taxonomy" id="355"/>
    <lineage>
        <taxon>Bacteria</taxon>
        <taxon>Pseudomonadati</taxon>
        <taxon>Pseudomonadota</taxon>
        <taxon>Gammaproteobacteria</taxon>
        <taxon>Pseudomonadales</taxon>
        <taxon>Pseudomonadaceae</taxon>
        <taxon>Azotobacter</taxon>
    </lineage>
</organism>
<proteinExistence type="inferred from homology"/>
<name>NIFH2_AZOCH</name>
<evidence type="ECO:0000250" key="1"/>
<evidence type="ECO:0000255" key="2"/>
<evidence type="ECO:0000305" key="3"/>
<sequence>MALRQCAIYGKGGIGKSTTTQNLVAALAEAGKKVMIVGCDPKADSTRLILHSKAQNTVMEMAASAGSGEDLELEDVLQIGYGGVKCVESGGPEPGVGCAGRGVITAINFLEEEGAYSDDLDFVFYDVLGDVVCGGFAMPIRENKAQEIYIVCSGEMMAMYAANNIAKGIVKYAHSGSVRLGGLICNSRKTDREDELIMALAAKIGTQMIHFVPRDNVVQHAEIRRMTVIEYDPKAKQADEYRALAQKILNNKLLVIPNPASMEDLEELLMEFGIMEAEDESIVGKAGAEG</sequence>
<dbReference type="EC" id="1.18.6.1"/>
<dbReference type="EMBL" id="X51756">
    <property type="protein sequence ID" value="CAA36055.1"/>
    <property type="molecule type" value="Genomic_DNA"/>
</dbReference>
<dbReference type="EMBL" id="X03916">
    <property type="protein sequence ID" value="CAA27553.1"/>
    <property type="molecule type" value="Genomic_DNA"/>
</dbReference>
<dbReference type="PIR" id="A25103">
    <property type="entry name" value="A25103"/>
</dbReference>
<dbReference type="SMR" id="P06118"/>
<dbReference type="GO" id="GO:0051539">
    <property type="term" value="F:4 iron, 4 sulfur cluster binding"/>
    <property type="evidence" value="ECO:0007669"/>
    <property type="project" value="UniProtKB-KW"/>
</dbReference>
<dbReference type="GO" id="GO:0005524">
    <property type="term" value="F:ATP binding"/>
    <property type="evidence" value="ECO:0007669"/>
    <property type="project" value="UniProtKB-UniRule"/>
</dbReference>
<dbReference type="GO" id="GO:0046872">
    <property type="term" value="F:metal ion binding"/>
    <property type="evidence" value="ECO:0007669"/>
    <property type="project" value="UniProtKB-KW"/>
</dbReference>
<dbReference type="GO" id="GO:0016163">
    <property type="term" value="F:nitrogenase activity"/>
    <property type="evidence" value="ECO:0007669"/>
    <property type="project" value="UniProtKB-UniRule"/>
</dbReference>
<dbReference type="GO" id="GO:0009399">
    <property type="term" value="P:nitrogen fixation"/>
    <property type="evidence" value="ECO:0007669"/>
    <property type="project" value="UniProtKB-UniRule"/>
</dbReference>
<dbReference type="CDD" id="cd02040">
    <property type="entry name" value="NifH"/>
    <property type="match status" value="1"/>
</dbReference>
<dbReference type="FunFam" id="3.40.50.300:FF:001379">
    <property type="entry name" value="Nitrogenase iron protein 1"/>
    <property type="match status" value="1"/>
</dbReference>
<dbReference type="Gene3D" id="3.40.50.300">
    <property type="entry name" value="P-loop containing nucleotide triphosphate hydrolases"/>
    <property type="match status" value="1"/>
</dbReference>
<dbReference type="HAMAP" id="MF_00533">
    <property type="entry name" value="NifH"/>
    <property type="match status" value="1"/>
</dbReference>
<dbReference type="InterPro" id="IPR030655">
    <property type="entry name" value="NifH/chlL_CS"/>
</dbReference>
<dbReference type="InterPro" id="IPR000392">
    <property type="entry name" value="NifH/frxC"/>
</dbReference>
<dbReference type="InterPro" id="IPR005977">
    <property type="entry name" value="Nitrogenase_Fe_NifH"/>
</dbReference>
<dbReference type="InterPro" id="IPR027417">
    <property type="entry name" value="P-loop_NTPase"/>
</dbReference>
<dbReference type="NCBIfam" id="TIGR01287">
    <property type="entry name" value="nifH"/>
    <property type="match status" value="1"/>
</dbReference>
<dbReference type="PANTHER" id="PTHR42864">
    <property type="entry name" value="LIGHT-INDEPENDENT PROTOCHLOROPHYLLIDE REDUCTASE IRON-SULFUR ATP-BINDING PROTEIN"/>
    <property type="match status" value="1"/>
</dbReference>
<dbReference type="PANTHER" id="PTHR42864:SF2">
    <property type="entry name" value="LIGHT-INDEPENDENT PROTOCHLOROPHYLLIDE REDUCTASE IRON-SULFUR ATP-BINDING PROTEIN"/>
    <property type="match status" value="1"/>
</dbReference>
<dbReference type="Pfam" id="PF00142">
    <property type="entry name" value="Fer4_NifH"/>
    <property type="match status" value="1"/>
</dbReference>
<dbReference type="PIRSF" id="PIRSF000363">
    <property type="entry name" value="Nitrogenase_iron"/>
    <property type="match status" value="1"/>
</dbReference>
<dbReference type="PRINTS" id="PR00091">
    <property type="entry name" value="NITROGNASEII"/>
</dbReference>
<dbReference type="SUPFAM" id="SSF52540">
    <property type="entry name" value="P-loop containing nucleoside triphosphate hydrolases"/>
    <property type="match status" value="1"/>
</dbReference>
<dbReference type="PROSITE" id="PS00746">
    <property type="entry name" value="NIFH_FRXC_1"/>
    <property type="match status" value="1"/>
</dbReference>
<dbReference type="PROSITE" id="PS00692">
    <property type="entry name" value="NIFH_FRXC_2"/>
    <property type="match status" value="1"/>
</dbReference>
<dbReference type="PROSITE" id="PS51026">
    <property type="entry name" value="NIFH_FRXC_3"/>
    <property type="match status" value="1"/>
</dbReference>
<protein>
    <recommendedName>
        <fullName>Nitrogenase iron protein 2</fullName>
        <ecNumber>1.18.6.1</ecNumber>
    </recommendedName>
    <alternativeName>
        <fullName>Nitrogenase Fe protein 2</fullName>
    </alternativeName>
    <alternativeName>
        <fullName>Nitrogenase component II</fullName>
    </alternativeName>
    <alternativeName>
        <fullName>Nitrogenase reductase</fullName>
    </alternativeName>
</protein>
<comment type="function">
    <text>The key enzymatic reactions in nitrogen fixation are catalyzed by the nitrogenase complex, which has 2 components: the iron protein (component 2) and a component 1 which is either a molybdenum-iron protein, a vanadium-iron, or an iron-iron protein.</text>
</comment>
<comment type="catalytic activity">
    <reaction>
        <text>N2 + 8 reduced [2Fe-2S]-[ferredoxin] + 16 ATP + 16 H2O = H2 + 8 oxidized [2Fe-2S]-[ferredoxin] + 2 NH4(+) + 16 ADP + 16 phosphate + 6 H(+)</text>
        <dbReference type="Rhea" id="RHEA:21448"/>
        <dbReference type="Rhea" id="RHEA-COMP:10000"/>
        <dbReference type="Rhea" id="RHEA-COMP:10001"/>
        <dbReference type="ChEBI" id="CHEBI:15377"/>
        <dbReference type="ChEBI" id="CHEBI:15378"/>
        <dbReference type="ChEBI" id="CHEBI:17997"/>
        <dbReference type="ChEBI" id="CHEBI:18276"/>
        <dbReference type="ChEBI" id="CHEBI:28938"/>
        <dbReference type="ChEBI" id="CHEBI:30616"/>
        <dbReference type="ChEBI" id="CHEBI:33737"/>
        <dbReference type="ChEBI" id="CHEBI:33738"/>
        <dbReference type="ChEBI" id="CHEBI:43474"/>
        <dbReference type="ChEBI" id="CHEBI:456216"/>
        <dbReference type="EC" id="1.18.6.1"/>
    </reaction>
</comment>
<comment type="cofactor">
    <cofactor>
        <name>[4Fe-4S] cluster</name>
        <dbReference type="ChEBI" id="CHEBI:49883"/>
    </cofactor>
    <text>Binds 1 [4Fe-4S] cluster per dimer.</text>
</comment>
<comment type="subunit">
    <text>Homodimer.</text>
</comment>
<comment type="PTM">
    <text evidence="1">The reversible ADP-ribosylation of Arg-101 inactivates the nitrogenase reductase and regulates nitrogenase activity.</text>
</comment>
<comment type="miscellaneous">
    <text>This subunit is associated with the vanadium-iron nitrogenase component 2.</text>
</comment>
<comment type="similarity">
    <text evidence="3">Belongs to the NifH/BchL/ChlL family.</text>
</comment>
<keyword id="KW-0004">4Fe-4S</keyword>
<keyword id="KW-0013">ADP-ribosylation</keyword>
<keyword id="KW-0067">ATP-binding</keyword>
<keyword id="KW-0408">Iron</keyword>
<keyword id="KW-0411">Iron-sulfur</keyword>
<keyword id="KW-0479">Metal-binding</keyword>
<keyword id="KW-0535">Nitrogen fixation</keyword>
<keyword id="KW-0547">Nucleotide-binding</keyword>
<keyword id="KW-0560">Oxidoreductase</keyword>
<accession>P06118</accession>
<feature type="chain" id="PRO_0000139489" description="Nitrogenase iron protein 2">
    <location>
        <begin position="1"/>
        <end position="290"/>
    </location>
</feature>
<feature type="binding site" evidence="2">
    <location>
        <begin position="10"/>
        <end position="17"/>
    </location>
    <ligand>
        <name>ATP</name>
        <dbReference type="ChEBI" id="CHEBI:30616"/>
    </ligand>
</feature>
<feature type="binding site" evidence="1">
    <location>
        <position position="98"/>
    </location>
    <ligand>
        <name>[4Fe-4S] cluster</name>
        <dbReference type="ChEBI" id="CHEBI:49883"/>
        <note>ligand shared between dimeric partners</note>
    </ligand>
</feature>
<feature type="binding site" evidence="1">
    <location>
        <position position="133"/>
    </location>
    <ligand>
        <name>[4Fe-4S] cluster</name>
        <dbReference type="ChEBI" id="CHEBI:49883"/>
        <note>ligand shared between dimeric partners</note>
    </ligand>
</feature>
<feature type="modified residue" description="ADP-ribosylarginine; by dinitrogenase reductase ADP-ribosyltransferase" evidence="1">
    <location>
        <position position="101"/>
    </location>
</feature>
<gene>
    <name type="primary">vnfH</name>
    <name type="synonym">nifH*</name>
    <name type="synonym">nifH2</name>
</gene>
<reference key="1">
    <citation type="journal article" date="1990" name="Nucleic Acids Res.">
        <title>Completed sequence of the region encoding the structural genes for the vanadium nitrogenase of Azotobacter chroococcum.</title>
        <authorList>
            <person name="Fallik E."/>
            <person name="Robson R.L."/>
        </authorList>
    </citation>
    <scope>NUCLEOTIDE SEQUENCE [GENOMIC DNA]</scope>
</reference>
<reference key="2">
    <citation type="journal article" date="1986" name="EMBO J.">
        <title>Second gene (nifH*) coding for a nitrogenase iron protein in Azotobacter chroococcum is adjacent to a gene coding for a ferredoxin-like protein.</title>
        <authorList>
            <person name="Robson R.L."/>
            <person name="Woodley P."/>
            <person name="Jones R."/>
        </authorList>
    </citation>
    <scope>NUCLEOTIDE SEQUENCE [GENOMIC DNA]</scope>
</reference>